<evidence type="ECO:0000255" key="1"/>
<evidence type="ECO:0000269" key="2">
    <source>
    </source>
</evidence>
<evidence type="ECO:0000269" key="3">
    <source>
    </source>
</evidence>
<evidence type="ECO:0000269" key="4">
    <source>
    </source>
</evidence>
<evidence type="ECO:0000303" key="5">
    <source>
    </source>
</evidence>
<evidence type="ECO:0000305" key="6"/>
<protein>
    <recommendedName>
        <fullName>Protein FAM151A</fullName>
    </recommendedName>
</protein>
<sequence>MVCREQLSKNQVKWVFAGITCVSVVVIAAIVLAITLRRPGCELEACSPDADMLDYLLSLGQISRRDALEVTWYHAANSKKAMTAALNSNITVLEADVNVEGLGTANETGVPIMAHPPTIYSDNTLEQWLDAVLGSSQKGIKLDFKNIKAVGPSLDLLRQLTEEGKVRRPIWINADILKGPNMLISTEVNATQFLALVQEKYPKATLSPGWTTFYMSTSPNRTYTQAMVEKMHELVGGVPQRVTFPVRSSMVRAAWPHFSWLLSQSERYSLTLWQAASDPMSVEDLLYVRDNTAVHQVYYDIFEPLLSQFKQLALNATRKPMYYTGGSLIPLLQLPGDDGLNVEWLVPDVQGSGKTATMTLPDTEGMILLNTGLEGTVAENPVPIVHTPSGNILTLESCLQQLATHPGHWGIHLQIAEPAALRPSLALLARLSSLGLLHWPVWVGAKISHGSFSVPGHVAGRELLTAVAEVFPHVTVAPGWPEEVLGSGYREQLLTDMLELCQGLWQPVSFQMQAMLLGHSTAGAIGRLLASSPRATVTVEHNPAGGDYASVRTALLAARAVDRTRVYYRLPQGYHKDLLAHVGRN</sequence>
<feature type="chain" id="PRO_0000310955" description="Protein FAM151A">
    <location>
        <begin position="1"/>
        <end position="585"/>
    </location>
</feature>
<feature type="transmembrane region" description="Helical" evidence="1">
    <location>
        <begin position="14"/>
        <end position="34"/>
    </location>
</feature>
<feature type="splice variant" id="VSP_029357" description="In isoform 2." evidence="5">
    <location>
        <begin position="307"/>
        <end position="493"/>
    </location>
</feature>
<feature type="sequence variant" id="VAR_037109" description="In dbSNP:rs17399297.">
    <original>D</original>
    <variation>N</variation>
    <location>
        <position position="51"/>
    </location>
</feature>
<feature type="sequence variant" id="VAR_037110" description="In dbSNP:rs17856620." evidence="4">
    <original>N</original>
    <variation>D</variation>
    <location>
        <position position="87"/>
    </location>
</feature>
<feature type="sequence variant" id="VAR_037111" description="In dbSNP:rs17851843." evidence="4">
    <original>I</original>
    <variation>T</variation>
    <location>
        <position position="119"/>
    </location>
</feature>
<feature type="sequence variant" id="VAR_037112" description="In dbSNP:rs1368883." evidence="2 3 4">
    <original>A</original>
    <variation>V</variation>
    <location>
        <position position="416"/>
    </location>
</feature>
<feature type="sequence variant" id="VAR_037113" description="In dbSNP:rs11206394.">
    <original>G</original>
    <variation>A</variation>
    <location>
        <position position="526"/>
    </location>
</feature>
<feature type="sequence variant" id="VAR_037114" description="In dbSNP:rs2289015.">
    <original>G</original>
    <variation>D</variation>
    <location>
        <position position="546"/>
    </location>
</feature>
<feature type="sequence conflict" description="In Ref. 2; BAC03768." evidence="6" ref="2">
    <original>N</original>
    <variation>D</variation>
    <location>
        <position position="173"/>
    </location>
</feature>
<keyword id="KW-0025">Alternative splicing</keyword>
<keyword id="KW-0472">Membrane</keyword>
<keyword id="KW-1267">Proteomics identification</keyword>
<keyword id="KW-1185">Reference proteome</keyword>
<keyword id="KW-0812">Transmembrane</keyword>
<keyword id="KW-1133">Transmembrane helix</keyword>
<proteinExistence type="evidence at protein level"/>
<organism>
    <name type="scientific">Homo sapiens</name>
    <name type="common">Human</name>
    <dbReference type="NCBI Taxonomy" id="9606"/>
    <lineage>
        <taxon>Eukaryota</taxon>
        <taxon>Metazoa</taxon>
        <taxon>Chordata</taxon>
        <taxon>Craniata</taxon>
        <taxon>Vertebrata</taxon>
        <taxon>Euteleostomi</taxon>
        <taxon>Mammalia</taxon>
        <taxon>Eutheria</taxon>
        <taxon>Euarchontoglires</taxon>
        <taxon>Primates</taxon>
        <taxon>Haplorrhini</taxon>
        <taxon>Catarrhini</taxon>
        <taxon>Hominidae</taxon>
        <taxon>Homo</taxon>
    </lineage>
</organism>
<dbReference type="EMBL" id="AY358629">
    <property type="protein sequence ID" value="AAQ88992.1"/>
    <property type="molecule type" value="mRNA"/>
</dbReference>
<dbReference type="EMBL" id="AK091901">
    <property type="protein sequence ID" value="BAC03768.1"/>
    <property type="molecule type" value="mRNA"/>
</dbReference>
<dbReference type="EMBL" id="AL590093">
    <property type="status" value="NOT_ANNOTATED_CDS"/>
    <property type="molecule type" value="Genomic_DNA"/>
</dbReference>
<dbReference type="EMBL" id="CH471059">
    <property type="protein sequence ID" value="EAX06685.1"/>
    <property type="molecule type" value="Genomic_DNA"/>
</dbReference>
<dbReference type="EMBL" id="BC015993">
    <property type="protein sequence ID" value="AAH15993.1"/>
    <property type="molecule type" value="mRNA"/>
</dbReference>
<dbReference type="EMBL" id="BC020874">
    <property type="protein sequence ID" value="AAH20874.1"/>
    <property type="molecule type" value="mRNA"/>
</dbReference>
<dbReference type="EMBL" id="BC073921">
    <property type="protein sequence ID" value="AAH73921.1"/>
    <property type="molecule type" value="mRNA"/>
</dbReference>
<dbReference type="CCDS" id="CCDS594.1">
    <molecule id="Q8WW52-1"/>
</dbReference>
<dbReference type="RefSeq" id="NP_788954.2">
    <molecule id="Q8WW52-1"/>
    <property type="nucleotide sequence ID" value="NM_176782.3"/>
</dbReference>
<dbReference type="BioGRID" id="130702">
    <property type="interactions" value="1"/>
</dbReference>
<dbReference type="FunCoup" id="Q8WW52">
    <property type="interactions" value="70"/>
</dbReference>
<dbReference type="IntAct" id="Q8WW52">
    <property type="interactions" value="1"/>
</dbReference>
<dbReference type="STRING" id="9606.ENSP00000306888"/>
<dbReference type="GlyGen" id="Q8WW52">
    <property type="glycosylation" value="3 sites, 54 N-linked glycans (2 sites), 1 O-linked glycan (1 site)"/>
</dbReference>
<dbReference type="iPTMnet" id="Q8WW52"/>
<dbReference type="PhosphoSitePlus" id="Q8WW52"/>
<dbReference type="BioMuta" id="FAM151A"/>
<dbReference type="DMDM" id="160380591"/>
<dbReference type="jPOST" id="Q8WW52"/>
<dbReference type="MassIVE" id="Q8WW52"/>
<dbReference type="PaxDb" id="9606-ENSP00000306888"/>
<dbReference type="PeptideAtlas" id="Q8WW52"/>
<dbReference type="ProteomicsDB" id="74862">
    <molecule id="Q8WW52-1"/>
</dbReference>
<dbReference type="ProteomicsDB" id="74863">
    <molecule id="Q8WW52-2"/>
</dbReference>
<dbReference type="Antibodypedia" id="52799">
    <property type="antibodies" value="69 antibodies from 13 providers"/>
</dbReference>
<dbReference type="DNASU" id="338094"/>
<dbReference type="Ensembl" id="ENST00000302250.7">
    <molecule id="Q8WW52-1"/>
    <property type="protein sequence ID" value="ENSP00000306888.2"/>
    <property type="gene ID" value="ENSG00000162391.12"/>
</dbReference>
<dbReference type="Ensembl" id="ENST00000371304.2">
    <molecule id="Q8WW52-2"/>
    <property type="protein sequence ID" value="ENSP00000360353.2"/>
    <property type="gene ID" value="ENSG00000162391.12"/>
</dbReference>
<dbReference type="GeneID" id="338094"/>
<dbReference type="KEGG" id="hsa:338094"/>
<dbReference type="MANE-Select" id="ENST00000302250.7">
    <property type="protein sequence ID" value="ENSP00000306888.2"/>
    <property type="RefSeq nucleotide sequence ID" value="NM_176782.3"/>
    <property type="RefSeq protein sequence ID" value="NP_788954.2"/>
</dbReference>
<dbReference type="UCSC" id="uc001cxn.4">
    <molecule id="Q8WW52-1"/>
    <property type="organism name" value="human"/>
</dbReference>
<dbReference type="AGR" id="HGNC:25032"/>
<dbReference type="CTD" id="338094"/>
<dbReference type="GeneCards" id="FAM151A"/>
<dbReference type="HGNC" id="HGNC:25032">
    <property type="gene designation" value="FAM151A"/>
</dbReference>
<dbReference type="HPA" id="ENSG00000162391">
    <property type="expression patterns" value="Group enriched (intestine, kidney)"/>
</dbReference>
<dbReference type="MalaCards" id="FAM151A"/>
<dbReference type="neXtProt" id="NX_Q8WW52"/>
<dbReference type="OpenTargets" id="ENSG00000162391"/>
<dbReference type="PharmGKB" id="PA162386465"/>
<dbReference type="VEuPathDB" id="HostDB:ENSG00000162391"/>
<dbReference type="eggNOG" id="KOG3748">
    <property type="taxonomic scope" value="Eukaryota"/>
</dbReference>
<dbReference type="GeneTree" id="ENSGT00530000063681"/>
<dbReference type="HOGENOM" id="CLU_033162_2_0_1"/>
<dbReference type="InParanoid" id="Q8WW52"/>
<dbReference type="OMA" id="AHQVYYD"/>
<dbReference type="OrthoDB" id="413402at2759"/>
<dbReference type="PAN-GO" id="Q8WW52">
    <property type="GO annotations" value="1 GO annotation based on evolutionary models"/>
</dbReference>
<dbReference type="PhylomeDB" id="Q8WW52"/>
<dbReference type="TreeFam" id="TF315079"/>
<dbReference type="PathwayCommons" id="Q8WW52"/>
<dbReference type="SignaLink" id="Q8WW52"/>
<dbReference type="BioGRID-ORCS" id="338094">
    <property type="hits" value="13 hits in 1141 CRISPR screens"/>
</dbReference>
<dbReference type="GenomeRNAi" id="338094"/>
<dbReference type="Pharos" id="Q8WW52">
    <property type="development level" value="Tdark"/>
</dbReference>
<dbReference type="PRO" id="PR:Q8WW52"/>
<dbReference type="Proteomes" id="UP000005640">
    <property type="component" value="Chromosome 1"/>
</dbReference>
<dbReference type="RNAct" id="Q8WW52">
    <property type="molecule type" value="protein"/>
</dbReference>
<dbReference type="Bgee" id="ENSG00000162391">
    <property type="expression patterns" value="Expressed in adult mammalian kidney and 84 other cell types or tissues"/>
</dbReference>
<dbReference type="GO" id="GO:0070062">
    <property type="term" value="C:extracellular exosome"/>
    <property type="evidence" value="ECO:0007005"/>
    <property type="project" value="UniProtKB"/>
</dbReference>
<dbReference type="GO" id="GO:0005615">
    <property type="term" value="C:extracellular space"/>
    <property type="evidence" value="ECO:0000318"/>
    <property type="project" value="GO_Central"/>
</dbReference>
<dbReference type="GO" id="GO:0016020">
    <property type="term" value="C:membrane"/>
    <property type="evidence" value="ECO:0000303"/>
    <property type="project" value="BHF-UCL"/>
</dbReference>
<dbReference type="InterPro" id="IPR019356">
    <property type="entry name" value="Memorin"/>
</dbReference>
<dbReference type="PANTHER" id="PTHR21184">
    <property type="entry name" value="MENORIN (DENDRITIC BRANCHING PROTEIN)"/>
    <property type="match status" value="1"/>
</dbReference>
<dbReference type="PANTHER" id="PTHR21184:SF4">
    <property type="entry name" value="PROTEIN FAM151A"/>
    <property type="match status" value="1"/>
</dbReference>
<dbReference type="Pfam" id="PF10223">
    <property type="entry name" value="Menorin"/>
    <property type="match status" value="2"/>
</dbReference>
<name>F151A_HUMAN</name>
<accession>Q8WW52</accession>
<accession>Q5VUG5</accession>
<accession>Q6DKH5</accession>
<accession>Q6UWV0</accession>
<accession>Q8NAX9</accession>
<accession>Q96KY5</accession>
<reference key="1">
    <citation type="journal article" date="2003" name="Genome Res.">
        <title>The secreted protein discovery initiative (SPDI), a large-scale effort to identify novel human secreted and transmembrane proteins: a bioinformatics assessment.</title>
        <authorList>
            <person name="Clark H.F."/>
            <person name="Gurney A.L."/>
            <person name="Abaya E."/>
            <person name="Baker K."/>
            <person name="Baldwin D.T."/>
            <person name="Brush J."/>
            <person name="Chen J."/>
            <person name="Chow B."/>
            <person name="Chui C."/>
            <person name="Crowley C."/>
            <person name="Currell B."/>
            <person name="Deuel B."/>
            <person name="Dowd P."/>
            <person name="Eaton D."/>
            <person name="Foster J.S."/>
            <person name="Grimaldi C."/>
            <person name="Gu Q."/>
            <person name="Hass P.E."/>
            <person name="Heldens S."/>
            <person name="Huang A."/>
            <person name="Kim H.S."/>
            <person name="Klimowski L."/>
            <person name="Jin Y."/>
            <person name="Johnson S."/>
            <person name="Lee J."/>
            <person name="Lewis L."/>
            <person name="Liao D."/>
            <person name="Mark M.R."/>
            <person name="Robbie E."/>
            <person name="Sanchez C."/>
            <person name="Schoenfeld J."/>
            <person name="Seshagiri S."/>
            <person name="Simmons L."/>
            <person name="Singh J."/>
            <person name="Smith V."/>
            <person name="Stinson J."/>
            <person name="Vagts A."/>
            <person name="Vandlen R.L."/>
            <person name="Watanabe C."/>
            <person name="Wieand D."/>
            <person name="Woods K."/>
            <person name="Xie M.-H."/>
            <person name="Yansura D.G."/>
            <person name="Yi S."/>
            <person name="Yu G."/>
            <person name="Yuan J."/>
            <person name="Zhang M."/>
            <person name="Zhang Z."/>
            <person name="Goddard A.D."/>
            <person name="Wood W.I."/>
            <person name="Godowski P.J."/>
            <person name="Gray A.M."/>
        </authorList>
    </citation>
    <scope>NUCLEOTIDE SEQUENCE [LARGE SCALE MRNA] (ISOFORM 1)</scope>
    <scope>VARIANT VAL-416</scope>
</reference>
<reference key="2">
    <citation type="journal article" date="2004" name="Nat. Genet.">
        <title>Complete sequencing and characterization of 21,243 full-length human cDNAs.</title>
        <authorList>
            <person name="Ota T."/>
            <person name="Suzuki Y."/>
            <person name="Nishikawa T."/>
            <person name="Otsuki T."/>
            <person name="Sugiyama T."/>
            <person name="Irie R."/>
            <person name="Wakamatsu A."/>
            <person name="Hayashi K."/>
            <person name="Sato H."/>
            <person name="Nagai K."/>
            <person name="Kimura K."/>
            <person name="Makita H."/>
            <person name="Sekine M."/>
            <person name="Obayashi M."/>
            <person name="Nishi T."/>
            <person name="Shibahara T."/>
            <person name="Tanaka T."/>
            <person name="Ishii S."/>
            <person name="Yamamoto J."/>
            <person name="Saito K."/>
            <person name="Kawai Y."/>
            <person name="Isono Y."/>
            <person name="Nakamura Y."/>
            <person name="Nagahari K."/>
            <person name="Murakami K."/>
            <person name="Yasuda T."/>
            <person name="Iwayanagi T."/>
            <person name="Wagatsuma M."/>
            <person name="Shiratori A."/>
            <person name="Sudo H."/>
            <person name="Hosoiri T."/>
            <person name="Kaku Y."/>
            <person name="Kodaira H."/>
            <person name="Kondo H."/>
            <person name="Sugawara M."/>
            <person name="Takahashi M."/>
            <person name="Kanda K."/>
            <person name="Yokoi T."/>
            <person name="Furuya T."/>
            <person name="Kikkawa E."/>
            <person name="Omura Y."/>
            <person name="Abe K."/>
            <person name="Kamihara K."/>
            <person name="Katsuta N."/>
            <person name="Sato K."/>
            <person name="Tanikawa M."/>
            <person name="Yamazaki M."/>
            <person name="Ninomiya K."/>
            <person name="Ishibashi T."/>
            <person name="Yamashita H."/>
            <person name="Murakawa K."/>
            <person name="Fujimori K."/>
            <person name="Tanai H."/>
            <person name="Kimata M."/>
            <person name="Watanabe M."/>
            <person name="Hiraoka S."/>
            <person name="Chiba Y."/>
            <person name="Ishida S."/>
            <person name="Ono Y."/>
            <person name="Takiguchi S."/>
            <person name="Watanabe S."/>
            <person name="Yosida M."/>
            <person name="Hotuta T."/>
            <person name="Kusano J."/>
            <person name="Kanehori K."/>
            <person name="Takahashi-Fujii A."/>
            <person name="Hara H."/>
            <person name="Tanase T.-O."/>
            <person name="Nomura Y."/>
            <person name="Togiya S."/>
            <person name="Komai F."/>
            <person name="Hara R."/>
            <person name="Takeuchi K."/>
            <person name="Arita M."/>
            <person name="Imose N."/>
            <person name="Musashino K."/>
            <person name="Yuuki H."/>
            <person name="Oshima A."/>
            <person name="Sasaki N."/>
            <person name="Aotsuka S."/>
            <person name="Yoshikawa Y."/>
            <person name="Matsunawa H."/>
            <person name="Ichihara T."/>
            <person name="Shiohata N."/>
            <person name="Sano S."/>
            <person name="Moriya S."/>
            <person name="Momiyama H."/>
            <person name="Satoh N."/>
            <person name="Takami S."/>
            <person name="Terashima Y."/>
            <person name="Suzuki O."/>
            <person name="Nakagawa S."/>
            <person name="Senoh A."/>
            <person name="Mizoguchi H."/>
            <person name="Goto Y."/>
            <person name="Shimizu F."/>
            <person name="Wakebe H."/>
            <person name="Hishigaki H."/>
            <person name="Watanabe T."/>
            <person name="Sugiyama A."/>
            <person name="Takemoto M."/>
            <person name="Kawakami B."/>
            <person name="Yamazaki M."/>
            <person name="Watanabe K."/>
            <person name="Kumagai A."/>
            <person name="Itakura S."/>
            <person name="Fukuzumi Y."/>
            <person name="Fujimori Y."/>
            <person name="Komiyama M."/>
            <person name="Tashiro H."/>
            <person name="Tanigami A."/>
            <person name="Fujiwara T."/>
            <person name="Ono T."/>
            <person name="Yamada K."/>
            <person name="Fujii Y."/>
            <person name="Ozaki K."/>
            <person name="Hirao M."/>
            <person name="Ohmori Y."/>
            <person name="Kawabata A."/>
            <person name="Hikiji T."/>
            <person name="Kobatake N."/>
            <person name="Inagaki H."/>
            <person name="Ikema Y."/>
            <person name="Okamoto S."/>
            <person name="Okitani R."/>
            <person name="Kawakami T."/>
            <person name="Noguchi S."/>
            <person name="Itoh T."/>
            <person name="Shigeta K."/>
            <person name="Senba T."/>
            <person name="Matsumura K."/>
            <person name="Nakajima Y."/>
            <person name="Mizuno T."/>
            <person name="Morinaga M."/>
            <person name="Sasaki M."/>
            <person name="Togashi T."/>
            <person name="Oyama M."/>
            <person name="Hata H."/>
            <person name="Watanabe M."/>
            <person name="Komatsu T."/>
            <person name="Mizushima-Sugano J."/>
            <person name="Satoh T."/>
            <person name="Shirai Y."/>
            <person name="Takahashi Y."/>
            <person name="Nakagawa K."/>
            <person name="Okumura K."/>
            <person name="Nagase T."/>
            <person name="Nomura N."/>
            <person name="Kikuchi H."/>
            <person name="Masuho Y."/>
            <person name="Yamashita R."/>
            <person name="Nakai K."/>
            <person name="Yada T."/>
            <person name="Nakamura Y."/>
            <person name="Ohara O."/>
            <person name="Isogai T."/>
            <person name="Sugano S."/>
        </authorList>
    </citation>
    <scope>NUCLEOTIDE SEQUENCE [LARGE SCALE MRNA] (ISOFORM 1)</scope>
    <scope>VARIANT VAL-416</scope>
    <source>
        <tissue>Kidney</tissue>
    </source>
</reference>
<reference key="3">
    <citation type="journal article" date="2006" name="Nature">
        <title>The DNA sequence and biological annotation of human chromosome 1.</title>
        <authorList>
            <person name="Gregory S.G."/>
            <person name="Barlow K.F."/>
            <person name="McLay K.E."/>
            <person name="Kaul R."/>
            <person name="Swarbreck D."/>
            <person name="Dunham A."/>
            <person name="Scott C.E."/>
            <person name="Howe K.L."/>
            <person name="Woodfine K."/>
            <person name="Spencer C.C.A."/>
            <person name="Jones M.C."/>
            <person name="Gillson C."/>
            <person name="Searle S."/>
            <person name="Zhou Y."/>
            <person name="Kokocinski F."/>
            <person name="McDonald L."/>
            <person name="Evans R."/>
            <person name="Phillips K."/>
            <person name="Atkinson A."/>
            <person name="Cooper R."/>
            <person name="Jones C."/>
            <person name="Hall R.E."/>
            <person name="Andrews T.D."/>
            <person name="Lloyd C."/>
            <person name="Ainscough R."/>
            <person name="Almeida J.P."/>
            <person name="Ambrose K.D."/>
            <person name="Anderson F."/>
            <person name="Andrew R.W."/>
            <person name="Ashwell R.I.S."/>
            <person name="Aubin K."/>
            <person name="Babbage A.K."/>
            <person name="Bagguley C.L."/>
            <person name="Bailey J."/>
            <person name="Beasley H."/>
            <person name="Bethel G."/>
            <person name="Bird C.P."/>
            <person name="Bray-Allen S."/>
            <person name="Brown J.Y."/>
            <person name="Brown A.J."/>
            <person name="Buckley D."/>
            <person name="Burton J."/>
            <person name="Bye J."/>
            <person name="Carder C."/>
            <person name="Chapman J.C."/>
            <person name="Clark S.Y."/>
            <person name="Clarke G."/>
            <person name="Clee C."/>
            <person name="Cobley V."/>
            <person name="Collier R.E."/>
            <person name="Corby N."/>
            <person name="Coville G.J."/>
            <person name="Davies J."/>
            <person name="Deadman R."/>
            <person name="Dunn M."/>
            <person name="Earthrowl M."/>
            <person name="Ellington A.G."/>
            <person name="Errington H."/>
            <person name="Frankish A."/>
            <person name="Frankland J."/>
            <person name="French L."/>
            <person name="Garner P."/>
            <person name="Garnett J."/>
            <person name="Gay L."/>
            <person name="Ghori M.R.J."/>
            <person name="Gibson R."/>
            <person name="Gilby L.M."/>
            <person name="Gillett W."/>
            <person name="Glithero R.J."/>
            <person name="Grafham D.V."/>
            <person name="Griffiths C."/>
            <person name="Griffiths-Jones S."/>
            <person name="Grocock R."/>
            <person name="Hammond S."/>
            <person name="Harrison E.S.I."/>
            <person name="Hart E."/>
            <person name="Haugen E."/>
            <person name="Heath P.D."/>
            <person name="Holmes S."/>
            <person name="Holt K."/>
            <person name="Howden P.J."/>
            <person name="Hunt A.R."/>
            <person name="Hunt S.E."/>
            <person name="Hunter G."/>
            <person name="Isherwood J."/>
            <person name="James R."/>
            <person name="Johnson C."/>
            <person name="Johnson D."/>
            <person name="Joy A."/>
            <person name="Kay M."/>
            <person name="Kershaw J.K."/>
            <person name="Kibukawa M."/>
            <person name="Kimberley A.M."/>
            <person name="King A."/>
            <person name="Knights A.J."/>
            <person name="Lad H."/>
            <person name="Laird G."/>
            <person name="Lawlor S."/>
            <person name="Leongamornlert D.A."/>
            <person name="Lloyd D.M."/>
            <person name="Loveland J."/>
            <person name="Lovell J."/>
            <person name="Lush M.J."/>
            <person name="Lyne R."/>
            <person name="Martin S."/>
            <person name="Mashreghi-Mohammadi M."/>
            <person name="Matthews L."/>
            <person name="Matthews N.S.W."/>
            <person name="McLaren S."/>
            <person name="Milne S."/>
            <person name="Mistry S."/>
            <person name="Moore M.J.F."/>
            <person name="Nickerson T."/>
            <person name="O'Dell C.N."/>
            <person name="Oliver K."/>
            <person name="Palmeiri A."/>
            <person name="Palmer S.A."/>
            <person name="Parker A."/>
            <person name="Patel D."/>
            <person name="Pearce A.V."/>
            <person name="Peck A.I."/>
            <person name="Pelan S."/>
            <person name="Phelps K."/>
            <person name="Phillimore B.J."/>
            <person name="Plumb R."/>
            <person name="Rajan J."/>
            <person name="Raymond C."/>
            <person name="Rouse G."/>
            <person name="Saenphimmachak C."/>
            <person name="Sehra H.K."/>
            <person name="Sheridan E."/>
            <person name="Shownkeen R."/>
            <person name="Sims S."/>
            <person name="Skuce C.D."/>
            <person name="Smith M."/>
            <person name="Steward C."/>
            <person name="Subramanian S."/>
            <person name="Sycamore N."/>
            <person name="Tracey A."/>
            <person name="Tromans A."/>
            <person name="Van Helmond Z."/>
            <person name="Wall M."/>
            <person name="Wallis J.M."/>
            <person name="White S."/>
            <person name="Whitehead S.L."/>
            <person name="Wilkinson J.E."/>
            <person name="Willey D.L."/>
            <person name="Williams H."/>
            <person name="Wilming L."/>
            <person name="Wray P.W."/>
            <person name="Wu Z."/>
            <person name="Coulson A."/>
            <person name="Vaudin M."/>
            <person name="Sulston J.E."/>
            <person name="Durbin R.M."/>
            <person name="Hubbard T."/>
            <person name="Wooster R."/>
            <person name="Dunham I."/>
            <person name="Carter N.P."/>
            <person name="McVean G."/>
            <person name="Ross M.T."/>
            <person name="Harrow J."/>
            <person name="Olson M.V."/>
            <person name="Beck S."/>
            <person name="Rogers J."/>
            <person name="Bentley D.R."/>
        </authorList>
    </citation>
    <scope>NUCLEOTIDE SEQUENCE [LARGE SCALE GENOMIC DNA]</scope>
</reference>
<reference key="4">
    <citation type="submission" date="2005-09" db="EMBL/GenBank/DDBJ databases">
        <authorList>
            <person name="Mural R.J."/>
            <person name="Istrail S."/>
            <person name="Sutton G.G."/>
            <person name="Florea L."/>
            <person name="Halpern A.L."/>
            <person name="Mobarry C.M."/>
            <person name="Lippert R."/>
            <person name="Walenz B."/>
            <person name="Shatkay H."/>
            <person name="Dew I."/>
            <person name="Miller J.R."/>
            <person name="Flanigan M.J."/>
            <person name="Edwards N.J."/>
            <person name="Bolanos R."/>
            <person name="Fasulo D."/>
            <person name="Halldorsson B.V."/>
            <person name="Hannenhalli S."/>
            <person name="Turner R."/>
            <person name="Yooseph S."/>
            <person name="Lu F."/>
            <person name="Nusskern D.R."/>
            <person name="Shue B.C."/>
            <person name="Zheng X.H."/>
            <person name="Zhong F."/>
            <person name="Delcher A.L."/>
            <person name="Huson D.H."/>
            <person name="Kravitz S.A."/>
            <person name="Mouchard L."/>
            <person name="Reinert K."/>
            <person name="Remington K.A."/>
            <person name="Clark A.G."/>
            <person name="Waterman M.S."/>
            <person name="Eichler E.E."/>
            <person name="Adams M.D."/>
            <person name="Hunkapiller M.W."/>
            <person name="Myers E.W."/>
            <person name="Venter J.C."/>
        </authorList>
    </citation>
    <scope>NUCLEOTIDE SEQUENCE [LARGE SCALE GENOMIC DNA]</scope>
</reference>
<reference key="5">
    <citation type="journal article" date="2004" name="Genome Res.">
        <title>The status, quality, and expansion of the NIH full-length cDNA project: the Mammalian Gene Collection (MGC).</title>
        <authorList>
            <consortium name="The MGC Project Team"/>
        </authorList>
    </citation>
    <scope>NUCLEOTIDE SEQUENCE [LARGE SCALE MRNA] (ISOFORMS 1 AND 2)</scope>
    <scope>VARIANTS ASP-87; THR-119 AND VAL-416</scope>
    <source>
        <tissue>Colon</tissue>
        <tissue>Kidney</tissue>
    </source>
</reference>
<comment type="subcellular location">
    <subcellularLocation>
        <location evidence="6">Membrane</location>
        <topology evidence="6">Single-pass membrane protein</topology>
    </subcellularLocation>
</comment>
<comment type="alternative products">
    <event type="alternative splicing"/>
    <isoform>
        <id>Q8WW52-1</id>
        <name>1</name>
        <sequence type="displayed"/>
    </isoform>
    <isoform>
        <id>Q8WW52-2</id>
        <name>2</name>
        <sequence type="described" ref="VSP_029357"/>
    </isoform>
</comment>
<comment type="similarity">
    <text evidence="6">Belongs to the menorin family.</text>
</comment>
<gene>
    <name type="primary">FAM151A</name>
    <name type="synonym">C1orf179</name>
    <name type="ORF">UNQ3034/PRO9836</name>
</gene>